<name>PGK_XANOR</name>
<accession>Q5GXA2</accession>
<proteinExistence type="inferred from homology"/>
<sequence length="391" mass="40841">MSIVRMTDLDLSGKRVLIRQDLNVPIDNGQITSEQRITASVPTIKLALEKGAAVMVTSHLGRPKEGSWTEEDSLAPVATRLAALLGVDVPLVRDWVDGVEVAPGQVVLLENCRMNVGEGKDDQTLARKYAALCDVFVMDAFGTAHRAQASTHGVIRFAPVAAGGPLLMAELDALAKALDNPAKPLLAIVAGSKVSTKLELLSNLVNKVDQLIVGGGIANTFIAAAGHHVGKSLNEPDLIPTANQIVADAKTRGAEIPLPTDVVVAKQFLPDAEASVKALDAVDADDLILDIGPQTAQRYAELIASAGTVVWNGPVGVFEFESFSHGTETLARAIASSKAFSIAGGGDTLAAVDKYDIAKDVTYISTGGGAFLEFLEGKTLPAVAALQARGQ</sequence>
<evidence type="ECO:0000255" key="1">
    <source>
        <dbReference type="HAMAP-Rule" id="MF_00145"/>
    </source>
</evidence>
<feature type="chain" id="PRO_1000058094" description="Phosphoglycerate kinase">
    <location>
        <begin position="1"/>
        <end position="391"/>
    </location>
</feature>
<feature type="binding site" evidence="1">
    <location>
        <begin position="21"/>
        <end position="23"/>
    </location>
    <ligand>
        <name>substrate</name>
    </ligand>
</feature>
<feature type="binding site" evidence="1">
    <location>
        <position position="36"/>
    </location>
    <ligand>
        <name>substrate</name>
    </ligand>
</feature>
<feature type="binding site" evidence="1">
    <location>
        <begin position="59"/>
        <end position="62"/>
    </location>
    <ligand>
        <name>substrate</name>
    </ligand>
</feature>
<feature type="binding site" evidence="1">
    <location>
        <position position="113"/>
    </location>
    <ligand>
        <name>substrate</name>
    </ligand>
</feature>
<feature type="binding site" evidence="1">
    <location>
        <position position="146"/>
    </location>
    <ligand>
        <name>substrate</name>
    </ligand>
</feature>
<feature type="binding site" evidence="1">
    <location>
        <position position="197"/>
    </location>
    <ligand>
        <name>ATP</name>
        <dbReference type="ChEBI" id="CHEBI:30616"/>
    </ligand>
</feature>
<feature type="binding site" evidence="1">
    <location>
        <position position="319"/>
    </location>
    <ligand>
        <name>ATP</name>
        <dbReference type="ChEBI" id="CHEBI:30616"/>
    </ligand>
</feature>
<feature type="binding site" evidence="1">
    <location>
        <begin position="345"/>
        <end position="348"/>
    </location>
    <ligand>
        <name>ATP</name>
        <dbReference type="ChEBI" id="CHEBI:30616"/>
    </ligand>
</feature>
<dbReference type="EC" id="2.7.2.3" evidence="1"/>
<dbReference type="EMBL" id="AE013598">
    <property type="protein sequence ID" value="AAW76669.1"/>
    <property type="molecule type" value="Genomic_DNA"/>
</dbReference>
<dbReference type="SMR" id="Q5GXA2"/>
<dbReference type="STRING" id="291331.XOO3415"/>
<dbReference type="KEGG" id="xoo:XOO3415"/>
<dbReference type="PATRIC" id="fig|291331.8.peg.3779"/>
<dbReference type="HOGENOM" id="CLU_025427_0_2_6"/>
<dbReference type="UniPathway" id="UPA00109">
    <property type="reaction ID" value="UER00185"/>
</dbReference>
<dbReference type="Proteomes" id="UP000006735">
    <property type="component" value="Chromosome"/>
</dbReference>
<dbReference type="GO" id="GO:0005829">
    <property type="term" value="C:cytosol"/>
    <property type="evidence" value="ECO:0007669"/>
    <property type="project" value="TreeGrafter"/>
</dbReference>
<dbReference type="GO" id="GO:0043531">
    <property type="term" value="F:ADP binding"/>
    <property type="evidence" value="ECO:0007669"/>
    <property type="project" value="TreeGrafter"/>
</dbReference>
<dbReference type="GO" id="GO:0005524">
    <property type="term" value="F:ATP binding"/>
    <property type="evidence" value="ECO:0007669"/>
    <property type="project" value="UniProtKB-KW"/>
</dbReference>
<dbReference type="GO" id="GO:0004618">
    <property type="term" value="F:phosphoglycerate kinase activity"/>
    <property type="evidence" value="ECO:0007669"/>
    <property type="project" value="UniProtKB-UniRule"/>
</dbReference>
<dbReference type="GO" id="GO:0006094">
    <property type="term" value="P:gluconeogenesis"/>
    <property type="evidence" value="ECO:0007669"/>
    <property type="project" value="TreeGrafter"/>
</dbReference>
<dbReference type="GO" id="GO:0006096">
    <property type="term" value="P:glycolytic process"/>
    <property type="evidence" value="ECO:0007669"/>
    <property type="project" value="UniProtKB-UniRule"/>
</dbReference>
<dbReference type="FunFam" id="3.40.50.1260:FF:000001">
    <property type="entry name" value="Phosphoglycerate kinase"/>
    <property type="match status" value="1"/>
</dbReference>
<dbReference type="FunFam" id="3.40.50.1260:FF:000002">
    <property type="entry name" value="Phosphoglycerate kinase"/>
    <property type="match status" value="1"/>
</dbReference>
<dbReference type="Gene3D" id="3.40.50.1260">
    <property type="entry name" value="Phosphoglycerate kinase, N-terminal domain"/>
    <property type="match status" value="2"/>
</dbReference>
<dbReference type="HAMAP" id="MF_00145">
    <property type="entry name" value="Phosphoglyc_kinase"/>
    <property type="match status" value="1"/>
</dbReference>
<dbReference type="InterPro" id="IPR001576">
    <property type="entry name" value="Phosphoglycerate_kinase"/>
</dbReference>
<dbReference type="InterPro" id="IPR015911">
    <property type="entry name" value="Phosphoglycerate_kinase_CS"/>
</dbReference>
<dbReference type="InterPro" id="IPR015824">
    <property type="entry name" value="Phosphoglycerate_kinase_N"/>
</dbReference>
<dbReference type="InterPro" id="IPR036043">
    <property type="entry name" value="Phosphoglycerate_kinase_sf"/>
</dbReference>
<dbReference type="PANTHER" id="PTHR11406">
    <property type="entry name" value="PHOSPHOGLYCERATE KINASE"/>
    <property type="match status" value="1"/>
</dbReference>
<dbReference type="PANTHER" id="PTHR11406:SF23">
    <property type="entry name" value="PHOSPHOGLYCERATE KINASE 1, CHLOROPLASTIC-RELATED"/>
    <property type="match status" value="1"/>
</dbReference>
<dbReference type="Pfam" id="PF00162">
    <property type="entry name" value="PGK"/>
    <property type="match status" value="1"/>
</dbReference>
<dbReference type="PIRSF" id="PIRSF000724">
    <property type="entry name" value="Pgk"/>
    <property type="match status" value="1"/>
</dbReference>
<dbReference type="PRINTS" id="PR00477">
    <property type="entry name" value="PHGLYCKINASE"/>
</dbReference>
<dbReference type="SUPFAM" id="SSF53748">
    <property type="entry name" value="Phosphoglycerate kinase"/>
    <property type="match status" value="1"/>
</dbReference>
<dbReference type="PROSITE" id="PS00111">
    <property type="entry name" value="PGLYCERATE_KINASE"/>
    <property type="match status" value="1"/>
</dbReference>
<gene>
    <name evidence="1" type="primary">pgk</name>
    <name type="ordered locus">XOO3415</name>
</gene>
<keyword id="KW-0067">ATP-binding</keyword>
<keyword id="KW-0963">Cytoplasm</keyword>
<keyword id="KW-0324">Glycolysis</keyword>
<keyword id="KW-0418">Kinase</keyword>
<keyword id="KW-0547">Nucleotide-binding</keyword>
<keyword id="KW-1185">Reference proteome</keyword>
<keyword id="KW-0808">Transferase</keyword>
<protein>
    <recommendedName>
        <fullName evidence="1">Phosphoglycerate kinase</fullName>
        <ecNumber evidence="1">2.7.2.3</ecNumber>
    </recommendedName>
</protein>
<reference key="1">
    <citation type="journal article" date="2005" name="Nucleic Acids Res.">
        <title>The genome sequence of Xanthomonas oryzae pathovar oryzae KACC10331, the bacterial blight pathogen of rice.</title>
        <authorList>
            <person name="Lee B.-M."/>
            <person name="Park Y.-J."/>
            <person name="Park D.-S."/>
            <person name="Kang H.-W."/>
            <person name="Kim J.-G."/>
            <person name="Song E.-S."/>
            <person name="Park I.-C."/>
            <person name="Yoon U.-H."/>
            <person name="Hahn J.-H."/>
            <person name="Koo B.-S."/>
            <person name="Lee G.-B."/>
            <person name="Kim H."/>
            <person name="Park H.-S."/>
            <person name="Yoon K.-O."/>
            <person name="Kim J.-H."/>
            <person name="Jung C.-H."/>
            <person name="Koh N.-H."/>
            <person name="Seo J.-S."/>
            <person name="Go S.-J."/>
        </authorList>
    </citation>
    <scope>NUCLEOTIDE SEQUENCE [LARGE SCALE GENOMIC DNA]</scope>
    <source>
        <strain>KACC10331 / KXO85</strain>
    </source>
</reference>
<comment type="catalytic activity">
    <reaction evidence="1">
        <text>(2R)-3-phosphoglycerate + ATP = (2R)-3-phospho-glyceroyl phosphate + ADP</text>
        <dbReference type="Rhea" id="RHEA:14801"/>
        <dbReference type="ChEBI" id="CHEBI:30616"/>
        <dbReference type="ChEBI" id="CHEBI:57604"/>
        <dbReference type="ChEBI" id="CHEBI:58272"/>
        <dbReference type="ChEBI" id="CHEBI:456216"/>
        <dbReference type="EC" id="2.7.2.3"/>
    </reaction>
</comment>
<comment type="pathway">
    <text evidence="1">Carbohydrate degradation; glycolysis; pyruvate from D-glyceraldehyde 3-phosphate: step 2/5.</text>
</comment>
<comment type="subunit">
    <text evidence="1">Monomer.</text>
</comment>
<comment type="subcellular location">
    <subcellularLocation>
        <location evidence="1">Cytoplasm</location>
    </subcellularLocation>
</comment>
<comment type="similarity">
    <text evidence="1">Belongs to the phosphoglycerate kinase family.</text>
</comment>
<organism>
    <name type="scientific">Xanthomonas oryzae pv. oryzae (strain KACC10331 / KXO85)</name>
    <dbReference type="NCBI Taxonomy" id="291331"/>
    <lineage>
        <taxon>Bacteria</taxon>
        <taxon>Pseudomonadati</taxon>
        <taxon>Pseudomonadota</taxon>
        <taxon>Gammaproteobacteria</taxon>
        <taxon>Lysobacterales</taxon>
        <taxon>Lysobacteraceae</taxon>
        <taxon>Xanthomonas</taxon>
    </lineage>
</organism>